<accession>A8AEQ5</accession>
<dbReference type="EMBL" id="CP000822">
    <property type="protein sequence ID" value="ABV11968.1"/>
    <property type="molecule type" value="Genomic_DNA"/>
</dbReference>
<dbReference type="RefSeq" id="WP_012131789.1">
    <property type="nucleotide sequence ID" value="NC_009792.1"/>
</dbReference>
<dbReference type="STRING" id="290338.CKO_00816"/>
<dbReference type="GeneID" id="45135013"/>
<dbReference type="KEGG" id="cko:CKO_00816"/>
<dbReference type="HOGENOM" id="CLU_136197_2_0_6"/>
<dbReference type="OrthoDB" id="1551318at2"/>
<dbReference type="UniPathway" id="UPA00148"/>
<dbReference type="Proteomes" id="UP000008148">
    <property type="component" value="Chromosome"/>
</dbReference>
<dbReference type="GO" id="GO:0005886">
    <property type="term" value="C:plasma membrane"/>
    <property type="evidence" value="ECO:0007669"/>
    <property type="project" value="UniProtKB-SubCell"/>
</dbReference>
<dbReference type="GO" id="GO:0015087">
    <property type="term" value="F:cobalt ion transmembrane transporter activity"/>
    <property type="evidence" value="ECO:0007669"/>
    <property type="project" value="UniProtKB-UniRule"/>
</dbReference>
<dbReference type="GO" id="GO:0009236">
    <property type="term" value="P:cobalamin biosynthetic process"/>
    <property type="evidence" value="ECO:0007669"/>
    <property type="project" value="UniProtKB-UniRule"/>
</dbReference>
<dbReference type="HAMAP" id="MF_00330">
    <property type="entry name" value="CbiN"/>
    <property type="match status" value="1"/>
</dbReference>
<dbReference type="InterPro" id="IPR003705">
    <property type="entry name" value="CbiN"/>
</dbReference>
<dbReference type="NCBIfam" id="TIGR01165">
    <property type="entry name" value="cbiN"/>
    <property type="match status" value="1"/>
</dbReference>
<dbReference type="NCBIfam" id="NF002780">
    <property type="entry name" value="PRK02898.1"/>
    <property type="match status" value="1"/>
</dbReference>
<dbReference type="PANTHER" id="PTHR38662">
    <property type="entry name" value="COBALT TRANSPORT PROTEIN CBIN"/>
    <property type="match status" value="1"/>
</dbReference>
<dbReference type="PANTHER" id="PTHR38662:SF1">
    <property type="entry name" value="COBALT TRANSPORT PROTEIN CBIN"/>
    <property type="match status" value="1"/>
</dbReference>
<dbReference type="Pfam" id="PF02553">
    <property type="entry name" value="CbiN"/>
    <property type="match status" value="1"/>
</dbReference>
<comment type="function">
    <text evidence="1">Part of the energy-coupling factor (ECF) transporter complex CbiMNOQ involved in cobalt import.</text>
</comment>
<comment type="pathway">
    <text evidence="1">Cofactor biosynthesis; adenosylcobalamin biosynthesis.</text>
</comment>
<comment type="subunit">
    <text evidence="1">Forms an energy-coupling factor (ECF) transporter complex composed of an ATP-binding protein (A component, CbiO), a transmembrane protein (T component, CbiQ) and 2 possible substrate-capture proteins (S components, CbiM and CbiN) of unknown stoichimetry.</text>
</comment>
<comment type="subcellular location">
    <subcellularLocation>
        <location evidence="1">Cell inner membrane</location>
        <topology evidence="1">Multi-pass membrane protein</topology>
    </subcellularLocation>
</comment>
<comment type="similarity">
    <text evidence="1">Belongs to the CbiN family.</text>
</comment>
<sequence>MKKTLILLAMVIALVILPFFIDHGGEFGGSDGEAESQIQVVAPHYEPWFQPLYEPASGEIESLLFTLQGSLGAAVIFYILGYSKGRQRRDDRA</sequence>
<evidence type="ECO:0000255" key="1">
    <source>
        <dbReference type="HAMAP-Rule" id="MF_00330"/>
    </source>
</evidence>
<feature type="chain" id="PRO_1000019392" description="Cobalt transport protein CbiN">
    <location>
        <begin position="1"/>
        <end position="93"/>
    </location>
</feature>
<feature type="transmembrane region" description="Helical" evidence="1">
    <location>
        <begin position="5"/>
        <end position="25"/>
    </location>
</feature>
<feature type="transmembrane region" description="Helical" evidence="1">
    <location>
        <begin position="62"/>
        <end position="82"/>
    </location>
</feature>
<organism>
    <name type="scientific">Citrobacter koseri (strain ATCC BAA-895 / CDC 4225-83 / SGSC4696)</name>
    <dbReference type="NCBI Taxonomy" id="290338"/>
    <lineage>
        <taxon>Bacteria</taxon>
        <taxon>Pseudomonadati</taxon>
        <taxon>Pseudomonadota</taxon>
        <taxon>Gammaproteobacteria</taxon>
        <taxon>Enterobacterales</taxon>
        <taxon>Enterobacteriaceae</taxon>
        <taxon>Citrobacter</taxon>
    </lineage>
</organism>
<protein>
    <recommendedName>
        <fullName evidence="1">Cobalt transport protein CbiN</fullName>
    </recommendedName>
    <alternativeName>
        <fullName evidence="1">Energy-coupling factor transporter probable substrate-capture protein CbiN</fullName>
        <shortName evidence="1">ECF transporter S component CbiN</shortName>
    </alternativeName>
</protein>
<name>CBIN_CITK8</name>
<gene>
    <name evidence="1" type="primary">cbiN</name>
    <name type="ordered locus">CKO_00816</name>
</gene>
<reference key="1">
    <citation type="submission" date="2007-08" db="EMBL/GenBank/DDBJ databases">
        <authorList>
            <consortium name="The Citrobacter koseri Genome Sequencing Project"/>
            <person name="McClelland M."/>
            <person name="Sanderson E.K."/>
            <person name="Porwollik S."/>
            <person name="Spieth J."/>
            <person name="Clifton W.S."/>
            <person name="Latreille P."/>
            <person name="Courtney L."/>
            <person name="Wang C."/>
            <person name="Pepin K."/>
            <person name="Bhonagiri V."/>
            <person name="Nash W."/>
            <person name="Johnson M."/>
            <person name="Thiruvilangam P."/>
            <person name="Wilson R."/>
        </authorList>
    </citation>
    <scope>NUCLEOTIDE SEQUENCE [LARGE SCALE GENOMIC DNA]</scope>
    <source>
        <strain>ATCC BAA-895 / CDC 4225-83 / SGSC4696</strain>
    </source>
</reference>
<keyword id="KW-0997">Cell inner membrane</keyword>
<keyword id="KW-1003">Cell membrane</keyword>
<keyword id="KW-0169">Cobalamin biosynthesis</keyword>
<keyword id="KW-0170">Cobalt</keyword>
<keyword id="KW-0171">Cobalt transport</keyword>
<keyword id="KW-0406">Ion transport</keyword>
<keyword id="KW-0472">Membrane</keyword>
<keyword id="KW-1185">Reference proteome</keyword>
<keyword id="KW-0812">Transmembrane</keyword>
<keyword id="KW-1133">Transmembrane helix</keyword>
<keyword id="KW-0813">Transport</keyword>
<proteinExistence type="inferred from homology"/>